<comment type="function">
    <text evidence="1">May be involved in environmental stress response.</text>
</comment>
<comment type="induction">
    <text evidence="4">By cold, dehydration and salt stress.</text>
</comment>
<organism>
    <name type="scientific">Oryza sativa subsp. japonica</name>
    <name type="common">Rice</name>
    <dbReference type="NCBI Taxonomy" id="39947"/>
    <lineage>
        <taxon>Eukaryota</taxon>
        <taxon>Viridiplantae</taxon>
        <taxon>Streptophyta</taxon>
        <taxon>Embryophyta</taxon>
        <taxon>Tracheophyta</taxon>
        <taxon>Spermatophyta</taxon>
        <taxon>Magnoliopsida</taxon>
        <taxon>Liliopsida</taxon>
        <taxon>Poales</taxon>
        <taxon>Poaceae</taxon>
        <taxon>BOP clade</taxon>
        <taxon>Oryzoideae</taxon>
        <taxon>Oryzeae</taxon>
        <taxon>Oryzinae</taxon>
        <taxon>Oryza</taxon>
        <taxon>Oryza sativa</taxon>
    </lineage>
</organism>
<gene>
    <name type="primary">SAP15</name>
    <name type="ordered locus">Os05g0299700</name>
    <name type="ordered locus">LOC_Os05g23470</name>
</gene>
<name>SAP15_ORYSJ</name>
<accession>Q0DJC7</accession>
<protein>
    <recommendedName>
        <fullName>Zinc finger AN1 domain-containing stress-associated protein 15</fullName>
        <shortName>OsSAP15</shortName>
    </recommendedName>
</protein>
<evidence type="ECO:0000250" key="1"/>
<evidence type="ECO:0000255" key="2">
    <source>
        <dbReference type="PROSITE-ProRule" id="PRU00449"/>
    </source>
</evidence>
<evidence type="ECO:0000256" key="3">
    <source>
        <dbReference type="SAM" id="MobiDB-lite"/>
    </source>
</evidence>
<evidence type="ECO:0000269" key="4">
    <source>
    </source>
</evidence>
<proteinExistence type="evidence at transcript level"/>
<feature type="chain" id="PRO_0000269878" description="Zinc finger AN1 domain-containing stress-associated protein 15">
    <location>
        <begin position="1"/>
        <end position="174"/>
    </location>
</feature>
<feature type="zinc finger region" description="AN1-type" evidence="2">
    <location>
        <begin position="109"/>
        <end position="155"/>
    </location>
</feature>
<feature type="region of interest" description="Disordered" evidence="3">
    <location>
        <begin position="1"/>
        <end position="61"/>
    </location>
</feature>
<feature type="compositionally biased region" description="Low complexity" evidence="3">
    <location>
        <begin position="18"/>
        <end position="41"/>
    </location>
</feature>
<feature type="compositionally biased region" description="Pro residues" evidence="3">
    <location>
        <begin position="42"/>
        <end position="54"/>
    </location>
</feature>
<feature type="binding site" evidence="2">
    <location>
        <position position="115"/>
    </location>
    <ligand>
        <name>Zn(2+)</name>
        <dbReference type="ChEBI" id="CHEBI:29105"/>
        <label>1</label>
    </ligand>
</feature>
<feature type="binding site" evidence="2">
    <location>
        <position position="118"/>
    </location>
    <ligand>
        <name>Zn(2+)</name>
        <dbReference type="ChEBI" id="CHEBI:29105"/>
        <label>1</label>
    </ligand>
</feature>
<feature type="binding site" evidence="2">
    <location>
        <position position="129"/>
    </location>
    <ligand>
        <name>Zn(2+)</name>
        <dbReference type="ChEBI" id="CHEBI:29105"/>
        <label>2</label>
    </ligand>
</feature>
<feature type="binding site" evidence="2">
    <location>
        <position position="131"/>
    </location>
    <ligand>
        <name>Zn(2+)</name>
        <dbReference type="ChEBI" id="CHEBI:29105"/>
        <label>2</label>
    </ligand>
</feature>
<feature type="binding site" evidence="2">
    <location>
        <position position="136"/>
    </location>
    <ligand>
        <name>Zn(2+)</name>
        <dbReference type="ChEBI" id="CHEBI:29105"/>
        <label>1</label>
    </ligand>
</feature>
<feature type="binding site" evidence="2">
    <location>
        <position position="139"/>
    </location>
    <ligand>
        <name>Zn(2+)</name>
        <dbReference type="ChEBI" id="CHEBI:29105"/>
        <label>1</label>
    </ligand>
</feature>
<feature type="binding site" evidence="2">
    <location>
        <position position="145"/>
    </location>
    <ligand>
        <name>Zn(2+)</name>
        <dbReference type="ChEBI" id="CHEBI:29105"/>
        <label>2</label>
    </ligand>
</feature>
<feature type="binding site" evidence="2">
    <location>
        <position position="147"/>
    </location>
    <ligand>
        <name>Zn(2+)</name>
        <dbReference type="ChEBI" id="CHEBI:29105"/>
        <label>2</label>
    </ligand>
</feature>
<dbReference type="EMBL" id="AP008211">
    <property type="protein sequence ID" value="BAF17046.1"/>
    <property type="molecule type" value="Genomic_DNA"/>
</dbReference>
<dbReference type="EMBL" id="AP014961">
    <property type="protein sequence ID" value="BAS93223.1"/>
    <property type="molecule type" value="Genomic_DNA"/>
</dbReference>
<dbReference type="EMBL" id="AK072411">
    <property type="status" value="NOT_ANNOTATED_CDS"/>
    <property type="molecule type" value="mRNA"/>
</dbReference>
<dbReference type="RefSeq" id="XP_015639532.1">
    <property type="nucleotide sequence ID" value="XM_015784046.1"/>
</dbReference>
<dbReference type="RefSeq" id="XP_015639533.1">
    <property type="nucleotide sequence ID" value="XM_015784047.1"/>
</dbReference>
<dbReference type="SMR" id="Q0DJC7"/>
<dbReference type="STRING" id="39947.Q0DJC7"/>
<dbReference type="PaxDb" id="39947-Q0DJC7"/>
<dbReference type="EnsemblPlants" id="Os05t0299700-01">
    <property type="protein sequence ID" value="Os05t0299700-01"/>
    <property type="gene ID" value="Os05g0299700"/>
</dbReference>
<dbReference type="Gramene" id="Os05t0299700-01">
    <property type="protein sequence ID" value="Os05t0299700-01"/>
    <property type="gene ID" value="Os05g0299700"/>
</dbReference>
<dbReference type="KEGG" id="dosa:Os05g0299700"/>
<dbReference type="eggNOG" id="KOG3173">
    <property type="taxonomic scope" value="Eukaryota"/>
</dbReference>
<dbReference type="HOGENOM" id="CLU_057016_3_0_1"/>
<dbReference type="InParanoid" id="Q0DJC7"/>
<dbReference type="OMA" id="KTCEGIH"/>
<dbReference type="OrthoDB" id="428577at2759"/>
<dbReference type="Proteomes" id="UP000000763">
    <property type="component" value="Chromosome 5"/>
</dbReference>
<dbReference type="Proteomes" id="UP000059680">
    <property type="component" value="Chromosome 5"/>
</dbReference>
<dbReference type="ExpressionAtlas" id="Q0DJC7">
    <property type="expression patterns" value="baseline and differential"/>
</dbReference>
<dbReference type="GO" id="GO:0004842">
    <property type="term" value="F:ubiquitin-protein transferase activity"/>
    <property type="evidence" value="ECO:0000318"/>
    <property type="project" value="GO_Central"/>
</dbReference>
<dbReference type="GO" id="GO:0008270">
    <property type="term" value="F:zinc ion binding"/>
    <property type="evidence" value="ECO:0007669"/>
    <property type="project" value="UniProtKB-KW"/>
</dbReference>
<dbReference type="GO" id="GO:0016567">
    <property type="term" value="P:protein ubiquitination"/>
    <property type="evidence" value="ECO:0000318"/>
    <property type="project" value="GO_Central"/>
</dbReference>
<dbReference type="FunFam" id="4.10.1110.10:FF:000001">
    <property type="entry name" value="Zinc finger AN1-type containing 6"/>
    <property type="match status" value="1"/>
</dbReference>
<dbReference type="Gene3D" id="4.10.1110.10">
    <property type="entry name" value="AN1-like Zinc finger"/>
    <property type="match status" value="1"/>
</dbReference>
<dbReference type="InterPro" id="IPR035896">
    <property type="entry name" value="AN1-like_Znf"/>
</dbReference>
<dbReference type="InterPro" id="IPR050652">
    <property type="entry name" value="AN1_A20_ZnFinger"/>
</dbReference>
<dbReference type="InterPro" id="IPR000058">
    <property type="entry name" value="Znf_AN1"/>
</dbReference>
<dbReference type="PANTHER" id="PTHR10634">
    <property type="entry name" value="AN1-TYPE ZINC FINGER PROTEIN"/>
    <property type="match status" value="1"/>
</dbReference>
<dbReference type="PANTHER" id="PTHR10634:SF99">
    <property type="entry name" value="ZINC FINGER AN1 DOMAIN-CONTAINING STRESS-ASSOCIATED PROTEIN 15"/>
    <property type="match status" value="1"/>
</dbReference>
<dbReference type="Pfam" id="PF01428">
    <property type="entry name" value="zf-AN1"/>
    <property type="match status" value="1"/>
</dbReference>
<dbReference type="SMART" id="SM00154">
    <property type="entry name" value="ZnF_AN1"/>
    <property type="match status" value="1"/>
</dbReference>
<dbReference type="SUPFAM" id="SSF118310">
    <property type="entry name" value="AN1-like Zinc finger"/>
    <property type="match status" value="1"/>
</dbReference>
<dbReference type="PROSITE" id="PS51039">
    <property type="entry name" value="ZF_AN1"/>
    <property type="match status" value="1"/>
</dbReference>
<keyword id="KW-0479">Metal-binding</keyword>
<keyword id="KW-1185">Reference proteome</keyword>
<keyword id="KW-0346">Stress response</keyword>
<keyword id="KW-0862">Zinc</keyword>
<keyword id="KW-0863">Zinc-finger</keyword>
<reference key="1">
    <citation type="journal article" date="2005" name="Nature">
        <title>The map-based sequence of the rice genome.</title>
        <authorList>
            <consortium name="International rice genome sequencing project (IRGSP)"/>
        </authorList>
    </citation>
    <scope>NUCLEOTIDE SEQUENCE [LARGE SCALE GENOMIC DNA]</scope>
    <source>
        <strain>cv. Nipponbare</strain>
    </source>
</reference>
<reference key="2">
    <citation type="journal article" date="2008" name="Nucleic Acids Res.">
        <title>The rice annotation project database (RAP-DB): 2008 update.</title>
        <authorList>
            <consortium name="The rice annotation project (RAP)"/>
        </authorList>
    </citation>
    <scope>GENOME REANNOTATION</scope>
    <source>
        <strain>cv. Nipponbare</strain>
    </source>
</reference>
<reference key="3">
    <citation type="journal article" date="2013" name="Rice">
        <title>Improvement of the Oryza sativa Nipponbare reference genome using next generation sequence and optical map data.</title>
        <authorList>
            <person name="Kawahara Y."/>
            <person name="de la Bastide M."/>
            <person name="Hamilton J.P."/>
            <person name="Kanamori H."/>
            <person name="McCombie W.R."/>
            <person name="Ouyang S."/>
            <person name="Schwartz D.C."/>
            <person name="Tanaka T."/>
            <person name="Wu J."/>
            <person name="Zhou S."/>
            <person name="Childs K.L."/>
            <person name="Davidson R.M."/>
            <person name="Lin H."/>
            <person name="Quesada-Ocampo L."/>
            <person name="Vaillancourt B."/>
            <person name="Sakai H."/>
            <person name="Lee S.S."/>
            <person name="Kim J."/>
            <person name="Numa H."/>
            <person name="Itoh T."/>
            <person name="Buell C.R."/>
            <person name="Matsumoto T."/>
        </authorList>
    </citation>
    <scope>GENOME REANNOTATION</scope>
    <source>
        <strain>cv. Nipponbare</strain>
    </source>
</reference>
<reference key="4">
    <citation type="journal article" date="2003" name="Science">
        <title>Collection, mapping, and annotation of over 28,000 cDNA clones from japonica rice.</title>
        <authorList>
            <consortium name="The rice full-length cDNA consortium"/>
        </authorList>
    </citation>
    <scope>NUCLEOTIDE SEQUENCE [LARGE SCALE MRNA]</scope>
    <source>
        <strain>cv. Nipponbare</strain>
    </source>
</reference>
<reference key="5">
    <citation type="journal article" date="2006" name="Mol. Genet. Genomics">
        <title>Genome-wide analysis of the stress associated protein (SAP) gene family containing A20/AN1 zinc-finger(s) in rice and their phylogenetic relationship with Arabidopsis.</title>
        <authorList>
            <person name="Vij S."/>
            <person name="Tyagi A.K."/>
        </authorList>
    </citation>
    <scope>GENE FAMILY</scope>
    <scope>INDUCTION</scope>
</reference>
<sequence length="174" mass="18364">MAQESCDLNKDEAEILKPSSSSSPSPSPTTASPSPPTAQMTEPPPPQSTPPTPPAAAAAASAAAAPQFSAKNCEGILIEVSKKRKLAEATATDANAVVVAAVAEPLSPVLFVNRCNVCRKRVGLTGFRCRCGELFCPRHRHSETHECSFDYKTAGREEIARANPVIRAAKIIKI</sequence>